<protein>
    <recommendedName>
        <fullName evidence="1">Protein Ycf2</fullName>
    </recommendedName>
</protein>
<proteinExistence type="inferred from homology"/>
<feature type="chain" id="PRO_0000242532" description="Protein Ycf2">
    <location>
        <begin position="1"/>
        <end position="2131"/>
    </location>
</feature>
<feature type="binding site" evidence="1">
    <location>
        <begin position="1466"/>
        <end position="1473"/>
    </location>
    <ligand>
        <name>ATP</name>
        <dbReference type="ChEBI" id="CHEBI:30616"/>
    </ligand>
</feature>
<name>YCF2_HELAN</name>
<geneLocation type="chloroplast"/>
<accession>Q1KXP6</accession>
<sequence length="2131" mass="249967">MTGHEFKSWILELREILREIKNSHYFLDSWTQFNSVGSFIHIFFHQERFIKLFDSRIWSILLSHNSQGSTSNRYFTIKGVILFGVAVLIYRINNRNMVERKNLYLIGLLPIPMNSIGPRNDTLEESVGSSNINRLIVSLLYLPKGKKIYESSFLNPKESTWVLPITKKCSMPESNWGSRWWRDWIGKKSDSSCKISNETVAGIEILFKEKDLKYLEFVFVYYRDDPIRKDHGWEFFDRLSLRKRQNRINLNSGPLFEILVKHWICYLMSAFREKIPIEVEGFFKQQGAGSTIQSNDIEHVSHLFSRNKSRLFTEREKQMINHMLPEEIEEFLGNPTRSVRSFFSDRWSELHLGSNPTERSTRDQKLLKKQQDLSFLRRSEKKEMVNLFKIITYLQNTVSIHPISLDSGCDMVPKDEPDMDSSNKISFLNKNPFFDLFHLFHDRNRGGYTLHHDFESEDRFQEMADLFTLSITEPDLVYHKRFAFSIDSYGLDPKQFLNGVFNSRYEWKTTSLLVLFPIFYEENESFYRRIRKNRVRISCGNDLEEPKPKIVVFASNNIMEAVNQYRLIRNLIQIQHSTHRYIRNVLNRFFLMNRSDRNFEYGIQRDQIRKDTLNHRTLMKYTINQHLSNLKKSQKRWFDPLIFFYRTERSMNRDPDAYRYKWSTGSNNFQEHLEHFVSEQKSRLQVVFDRLRINPYSIDWSEVIDKKDLSKPLRFFLSKLLLFLSNSLPFLFVSFGNIPIHRSEIYIYQLKGPNDPQFLESIGLQIVHLKKLKPFLLDDHETCQKSKFLINGGTISPFLFNKIPKWMIDSFHTRNNRRKSFDNTDSYFSMIFHDQYNWLNPVKSFHRSSLRSSFYKGNQLRFLNNPHHFCFYCNKRFPFYVEKARINNYDFTYGQFLNILFIRNKIFSLCVGKKKHAFWGRDTISAIESQVSNIFIPKAFPQSGDETYNLYKSFHFPSRSNPFVRRAIYSIADISGTPLTEGQIVNFERTYCQPLSDMNLSDSEGKNLYQYLNFNSNMGLIHTPCSEKYLPSEKRKKRSLCLKKCVEKGQMYRTFQRDSAYSTLSKWNLFQTYMPWFLTSTGYRYLKFLFLDTFSDLLPILSSSQKFVSIFHDIMHGSDISWRILQKKFCLPQWNLISEISSKCFHNLLLSEEMIHRNNESPLISTHLTNVREFLYAILFLLLVAAYLVCTHLLFVFGASSELQAEFEKVKSLMIPSSMIELRKILDRYPTSEPNSFWLKNLFLVALKQLGDSLGGNMLLGGGPAYGVKSIRSKKKYLNINLIDIIDLISIIPNPINRITFSRNTRHLSHTSKEIYSLIRKRKNVNGDWIDDKIESWVANSDSIDDEKREFLVQFSTLTTEKRIDQILLSLTHSDHLSKNDSGYQMIEQPGAIYLRDLVDIHKKYLMNYEFNTSSLAERRIFLAHYQTITYSQTSCGANSFHFPSHGKPFSLRLALSLSRGILVIGSIGTGRSYLVKYLAKNSYLPFITVFLNKFLDNKSQGFDDIDIDDLDASDDLDASDDLDASDDLDASDDILDMELELLTSMNALTMNMMPEDEDQLYITLQFELAKAMSPCIIWIPNIHDLDVNESNYFSLGLLVNLLSRDYETRNILVIASTHIPQKVDPALIAPNKLNTCIKIRRLLIPQQRKHFFTLSYTRGFHLEKKMFHTNGFGSITMGSNARDLVALTNEALSISITQKKSIIDTNTIRSALHRQIWDLRSQVRSVQDHGILFYQIGRAVAQNVLLSNCPIDPISIYMKKKSCNEVDFYLYNWYFELGTSMKKLTILLYLLSCSAGSVTQDLWSLPGPDEKNGITPYGLVENDSGLVRGLLEVEGALVGSSRTCSQFDKDRVTLLLRPEPRNPLDMMQKGSCSILDQRFLYEKDESEFEEGEGALDRQQIEEDLFNHIVWAPRIWRPWGFLFDCIERPNELGFPYWSRSFRGKRIIYDKEDELQENDSEFLQSGTAQYQTRDRSSKEQGLFRISQFIWDPADPLFFLFKAQPFVSVFSHRELFADEEMSKGLLTPQTNPPTSLYKRWFIKKTQEKHFELLINRQRWLRTNRSLSNGSFRSNTLSESYQYLSNLFLSNGTLLDQMTKALLRKRWLFPDEMQIGFMEQEKDFPFLSRKDMWP</sequence>
<organism>
    <name type="scientific">Helianthus annuus</name>
    <name type="common">Common sunflower</name>
    <dbReference type="NCBI Taxonomy" id="4232"/>
    <lineage>
        <taxon>Eukaryota</taxon>
        <taxon>Viridiplantae</taxon>
        <taxon>Streptophyta</taxon>
        <taxon>Embryophyta</taxon>
        <taxon>Tracheophyta</taxon>
        <taxon>Spermatophyta</taxon>
        <taxon>Magnoliopsida</taxon>
        <taxon>eudicotyledons</taxon>
        <taxon>Gunneridae</taxon>
        <taxon>Pentapetalae</taxon>
        <taxon>asterids</taxon>
        <taxon>campanulids</taxon>
        <taxon>Asterales</taxon>
        <taxon>Asteraceae</taxon>
        <taxon>Asteroideae</taxon>
        <taxon>Heliantheae alliance</taxon>
        <taxon>Heliantheae</taxon>
        <taxon>Helianthus</taxon>
    </lineage>
</organism>
<keyword id="KW-0067">ATP-binding</keyword>
<keyword id="KW-0150">Chloroplast</keyword>
<keyword id="KW-0547">Nucleotide-binding</keyword>
<keyword id="KW-0934">Plastid</keyword>
<comment type="function">
    <text>Probable ATPase of unknown function. Its presence in a non-photosynthetic plant (Epifagus virginiana) and experiments in tobacco indicate that it has an essential function which is probably not related to photosynthesis.</text>
</comment>
<comment type="subcellular location">
    <subcellularLocation>
        <location evidence="1">Plastid</location>
        <location evidence="1">Chloroplast stroma</location>
    </subcellularLocation>
</comment>
<comment type="similarity">
    <text evidence="1">Belongs to the Ycf2 family.</text>
</comment>
<dbReference type="EMBL" id="DQ383815">
    <property type="protein sequence ID" value="ABD47209.1"/>
    <property type="molecule type" value="Genomic_DNA"/>
</dbReference>
<dbReference type="EMBL" id="DQ383815">
    <property type="protein sequence ID" value="ABD47189.1"/>
    <property type="molecule type" value="Genomic_DNA"/>
</dbReference>
<dbReference type="KEGG" id="han:4055602"/>
<dbReference type="KEGG" id="han:4055685"/>
<dbReference type="OrthoDB" id="1669967at2759"/>
<dbReference type="GO" id="GO:0009570">
    <property type="term" value="C:chloroplast stroma"/>
    <property type="evidence" value="ECO:0007669"/>
    <property type="project" value="UniProtKB-SubCell"/>
</dbReference>
<dbReference type="GO" id="GO:0005524">
    <property type="term" value="F:ATP binding"/>
    <property type="evidence" value="ECO:0007669"/>
    <property type="project" value="UniProtKB-KW"/>
</dbReference>
<dbReference type="GO" id="GO:0016887">
    <property type="term" value="F:ATP hydrolysis activity"/>
    <property type="evidence" value="ECO:0007669"/>
    <property type="project" value="InterPro"/>
</dbReference>
<dbReference type="CDD" id="cd19505">
    <property type="entry name" value="RecA-like_Ycf2"/>
    <property type="match status" value="1"/>
</dbReference>
<dbReference type="Gene3D" id="3.40.50.300">
    <property type="entry name" value="P-loop containing nucleotide triphosphate hydrolases"/>
    <property type="match status" value="1"/>
</dbReference>
<dbReference type="HAMAP" id="MF_01330">
    <property type="entry name" value="Ycf2"/>
    <property type="match status" value="1"/>
</dbReference>
<dbReference type="InterPro" id="IPR003593">
    <property type="entry name" value="AAA+_ATPase"/>
</dbReference>
<dbReference type="InterPro" id="IPR003959">
    <property type="entry name" value="ATPase_AAA_core"/>
</dbReference>
<dbReference type="InterPro" id="IPR027417">
    <property type="entry name" value="P-loop_NTPase"/>
</dbReference>
<dbReference type="InterPro" id="IPR008543">
    <property type="entry name" value="Uncharacterised_Ycf2"/>
</dbReference>
<dbReference type="InterPro" id="IPR056777">
    <property type="entry name" value="Ycf2_N"/>
</dbReference>
<dbReference type="PANTHER" id="PTHR33078:SF92">
    <property type="entry name" value="PROTEIN YCF2"/>
    <property type="match status" value="1"/>
</dbReference>
<dbReference type="PANTHER" id="PTHR33078">
    <property type="entry name" value="PROTEIN YCF2-RELATED"/>
    <property type="match status" value="1"/>
</dbReference>
<dbReference type="Pfam" id="PF00004">
    <property type="entry name" value="AAA"/>
    <property type="match status" value="1"/>
</dbReference>
<dbReference type="Pfam" id="PF05695">
    <property type="entry name" value="Ycf2"/>
    <property type="match status" value="2"/>
</dbReference>
<dbReference type="SMART" id="SM00382">
    <property type="entry name" value="AAA"/>
    <property type="match status" value="1"/>
</dbReference>
<dbReference type="SUPFAM" id="SSF52540">
    <property type="entry name" value="P-loop containing nucleoside triphosphate hydrolases"/>
    <property type="match status" value="1"/>
</dbReference>
<reference key="1">
    <citation type="submission" date="2006-01" db="EMBL/GenBank/DDBJ databases">
        <title>A comparison of the first two published chloroplast genomes in Asteraceae: Lactuca and Helianthus.</title>
        <authorList>
            <person name="Timme R.E."/>
            <person name="Kuehl J.V."/>
            <person name="Boore J.L."/>
            <person name="Jansen R.K."/>
        </authorList>
    </citation>
    <scope>NUCLEOTIDE SEQUENCE [LARGE SCALE GENOMIC DNA]</scope>
    <source>
        <strain>cv. HA383</strain>
    </source>
</reference>
<gene>
    <name evidence="1" type="primary">ycf2-A</name>
</gene>
<gene>
    <name evidence="1" type="primary">ycf2-B</name>
</gene>
<evidence type="ECO:0000255" key="1">
    <source>
        <dbReference type="HAMAP-Rule" id="MF_01330"/>
    </source>
</evidence>